<sequence length="20" mass="2713">FLNPFRWMINKYREWKNKKN</sequence>
<name>TXC6F_CUPSA</name>
<dbReference type="GO" id="GO:0005576">
    <property type="term" value="C:extracellular region"/>
    <property type="evidence" value="ECO:0007669"/>
    <property type="project" value="UniProtKB-SubCell"/>
</dbReference>
<dbReference type="GO" id="GO:0090729">
    <property type="term" value="F:toxin activity"/>
    <property type="evidence" value="ECO:0007669"/>
    <property type="project" value="UniProtKB-KW"/>
</dbReference>
<evidence type="ECO:0000269" key="1">
    <source>
    </source>
</evidence>
<evidence type="ECO:0000303" key="2">
    <source>
    </source>
</evidence>
<evidence type="ECO:0000303" key="3">
    <source ref="2"/>
</evidence>
<evidence type="ECO:0000305" key="4"/>
<evidence type="ECO:0000305" key="5">
    <source>
    </source>
</evidence>
<proteinExistence type="evidence at protein level"/>
<organism>
    <name type="scientific">Cupiennius salei</name>
    <name type="common">American wandering spider</name>
    <dbReference type="NCBI Taxonomy" id="6928"/>
    <lineage>
        <taxon>Eukaryota</taxon>
        <taxon>Metazoa</taxon>
        <taxon>Ecdysozoa</taxon>
        <taxon>Arthropoda</taxon>
        <taxon>Chelicerata</taxon>
        <taxon>Arachnida</taxon>
        <taxon>Araneae</taxon>
        <taxon>Araneomorphae</taxon>
        <taxon>Entelegynae</taxon>
        <taxon>Lycosoidea</taxon>
        <taxon>Ctenidae</taxon>
        <taxon>Cupiennius</taxon>
    </lineage>
</organism>
<accession>B3EWX1</accession>
<feature type="peptide" id="PRO_0000421230" description="Cupiennin-6f" evidence="1">
    <location>
        <begin position="1"/>
        <end position="20"/>
    </location>
</feature>
<comment type="subcellular location">
    <subcellularLocation>
        <location evidence="1">Secreted</location>
    </subcellularLocation>
</comment>
<comment type="tissue specificity">
    <text evidence="5">Expressed by the venom gland.</text>
</comment>
<comment type="mass spectrometry" mass="2711.428" method="Electrospray" evidence="1"/>
<comment type="similarity">
    <text evidence="4">Belongs to the cationic peptide 04 (cupiennin) family. 06 subfamily.</text>
</comment>
<protein>
    <recommendedName>
        <fullName evidence="3">Cupiennin-6f</fullName>
        <shortName evidence="3">Cu-6f</shortName>
    </recommendedName>
    <alternativeName>
        <fullName evidence="2">Short cationic peptide-6g</fullName>
        <shortName evidence="2">SCP-6g</shortName>
    </alternativeName>
</protein>
<reference key="1">
    <citation type="journal article" date="2012" name="FEBS J.">
        <title>Multicomponent venom of the spider Cupiennius salei: a bioanalytical investigation applying different strategies.</title>
        <authorList>
            <person name="Trachsel C."/>
            <person name="Siegemund D."/>
            <person name="Kampfer U."/>
            <person name="Kopp L.S."/>
            <person name="Buhr C."/>
            <person name="Grossmann J."/>
            <person name="Luthi C."/>
            <person name="Cunningham M."/>
            <person name="Nentwig W."/>
            <person name="Kuhn-Nentwig L."/>
            <person name="Schurch S."/>
            <person name="Schaller J."/>
        </authorList>
    </citation>
    <scope>PROTEIN SEQUENCE</scope>
    <scope>MASS SPECTROMETRY</scope>
    <source>
        <tissue>Venom</tissue>
    </source>
</reference>
<reference key="2">
    <citation type="unpublished observations" date="2015-06">
        <authorList>
            <person name="Kuhn-Nentwig L."/>
            <person name="Gohel T."/>
        </authorList>
    </citation>
    <scope>NOMENCLATURE</scope>
</reference>
<keyword id="KW-0903">Direct protein sequencing</keyword>
<keyword id="KW-0964">Secreted</keyword>
<keyword id="KW-0800">Toxin</keyword>